<feature type="chain" id="PRO_0000360902" description="Probable nitronate monooxygenase">
    <location>
        <begin position="1"/>
        <end position="357"/>
    </location>
</feature>
<feature type="binding site" evidence="2">
    <location>
        <position position="71"/>
    </location>
    <ligand>
        <name>FMN</name>
        <dbReference type="ChEBI" id="CHEBI:58210"/>
    </ligand>
</feature>
<feature type="binding site" evidence="2">
    <location>
        <position position="175"/>
    </location>
    <ligand>
        <name>FMN</name>
        <dbReference type="ChEBI" id="CHEBI:58210"/>
    </ligand>
</feature>
<feature type="binding site" evidence="2">
    <location>
        <position position="180"/>
    </location>
    <ligand>
        <name>FMN</name>
        <dbReference type="ChEBI" id="CHEBI:58210"/>
    </ligand>
</feature>
<feature type="binding site" evidence="2">
    <location>
        <position position="219"/>
    </location>
    <ligand>
        <name>FMN</name>
        <dbReference type="ChEBI" id="CHEBI:58210"/>
    </ligand>
</feature>
<feature type="binding site" evidence="2">
    <location>
        <begin position="238"/>
        <end position="241"/>
    </location>
    <ligand>
        <name>FMN</name>
        <dbReference type="ChEBI" id="CHEBI:58210"/>
    </ligand>
</feature>
<keyword id="KW-0216">Detoxification</keyword>
<keyword id="KW-0285">Flavoprotein</keyword>
<keyword id="KW-0288">FMN</keyword>
<keyword id="KW-0503">Monooxygenase</keyword>
<keyword id="KW-0547">Nucleotide-binding</keyword>
<keyword id="KW-0560">Oxidoreductase</keyword>
<protein>
    <recommendedName>
        <fullName>Probable nitronate monooxygenase</fullName>
        <shortName>NMO</shortName>
        <ecNumber evidence="2">1.13.12.-</ecNumber>
    </recommendedName>
    <alternativeName>
        <fullName>Propionate 3-nitronate monooxygenase</fullName>
        <shortName>P3N monooxygenase</shortName>
    </alternativeName>
</protein>
<name>NMO_STAHJ</name>
<sequence>MWYNNQLTQSLNIQYPIIQAGMAGSTTAELVATVSNKGGLGCIGAGYFTTKKLEQEIQKVQGLTSQPFGVNLFVPSHQSYTNEQVEHMNAWLKPYRKALNLEEPVVNISEEQQFKSAIQTVIKYRVPVCCFTFGIPSKEIIEQLKGAKITLIGTATTVDEAIANEHAGMDIVVAQGSEAGGHRGSFLTTNNQREPLIGTMSLIPQIVDHVSIPVVAAGGVMDGRGILASQILGAQGVQMGTAFLTTEESGANQLVKQAVLHSKETDTIVTDVFSGKSARGINNEFVETMKQYEGNIPPYPVQNQLTNSIRKTAASTGHREWTHMWSGQSPRLATSQHVNQLMDRLVEQVKTLLTVVR</sequence>
<organism>
    <name type="scientific">Staphylococcus haemolyticus (strain JCSC1435)</name>
    <dbReference type="NCBI Taxonomy" id="279808"/>
    <lineage>
        <taxon>Bacteria</taxon>
        <taxon>Bacillati</taxon>
        <taxon>Bacillota</taxon>
        <taxon>Bacilli</taxon>
        <taxon>Bacillales</taxon>
        <taxon>Staphylococcaceae</taxon>
        <taxon>Staphylococcus</taxon>
    </lineage>
</organism>
<comment type="function">
    <text evidence="2">Nitronate monooxygenase that uses molecular oxygen to catalyze the oxidative denitrification of alkyl nitronates. Acts on propionate 3-nitronate (P3N), the presumed physiological substrate. Probably functions in the detoxification of P3N, a metabolic poison produced by plants and fungi as a defense mechanism.</text>
</comment>
<comment type="catalytic activity">
    <reaction evidence="1">
        <text>3 propionate 3-nitronate + 3 O2 + H2O = 3 3-oxopropanoate + 2 nitrate + nitrite + H2O2 + 3 H(+)</text>
        <dbReference type="Rhea" id="RHEA:57332"/>
        <dbReference type="ChEBI" id="CHEBI:15377"/>
        <dbReference type="ChEBI" id="CHEBI:15378"/>
        <dbReference type="ChEBI" id="CHEBI:15379"/>
        <dbReference type="ChEBI" id="CHEBI:16240"/>
        <dbReference type="ChEBI" id="CHEBI:16301"/>
        <dbReference type="ChEBI" id="CHEBI:17632"/>
        <dbReference type="ChEBI" id="CHEBI:33190"/>
        <dbReference type="ChEBI" id="CHEBI:136067"/>
    </reaction>
</comment>
<comment type="cofactor">
    <cofactor evidence="2">
        <name>FMN</name>
        <dbReference type="ChEBI" id="CHEBI:58210"/>
    </cofactor>
    <text evidence="2">Binds 1 FMN per subunit.</text>
</comment>
<comment type="miscellaneous">
    <text evidence="3">P3N is a potent irreversible inhibitor of the key enzyme succinate dehydrogenase in the Krebs cycle and electron transport chain. P3N has been shown to be a toxic metabolite to bacteria, plants, fungi, mammals or any organism that uses succinate dehydrogenase.</text>
</comment>
<comment type="similarity">
    <text evidence="3">Belongs to the nitronate monooxygenase family. NMO class I subfamily.</text>
</comment>
<dbReference type="EC" id="1.13.12.-" evidence="2"/>
<dbReference type="EMBL" id="AP006716">
    <property type="protein sequence ID" value="BAE05341.1"/>
    <property type="molecule type" value="Genomic_DNA"/>
</dbReference>
<dbReference type="RefSeq" id="WP_011276298.1">
    <property type="nucleotide sequence ID" value="NC_007168.1"/>
</dbReference>
<dbReference type="SMR" id="Q4L4T4"/>
<dbReference type="KEGG" id="sha:SH2032"/>
<dbReference type="eggNOG" id="COG2070">
    <property type="taxonomic scope" value="Bacteria"/>
</dbReference>
<dbReference type="HOGENOM" id="CLU_038732_5_1_9"/>
<dbReference type="OrthoDB" id="9778912at2"/>
<dbReference type="Proteomes" id="UP000000543">
    <property type="component" value="Chromosome"/>
</dbReference>
<dbReference type="GO" id="GO:0018580">
    <property type="term" value="F:nitronate monooxygenase activity"/>
    <property type="evidence" value="ECO:0007669"/>
    <property type="project" value="InterPro"/>
</dbReference>
<dbReference type="GO" id="GO:0000166">
    <property type="term" value="F:nucleotide binding"/>
    <property type="evidence" value="ECO:0007669"/>
    <property type="project" value="UniProtKB-KW"/>
</dbReference>
<dbReference type="GO" id="GO:0009636">
    <property type="term" value="P:response to toxic substance"/>
    <property type="evidence" value="ECO:0007669"/>
    <property type="project" value="UniProtKB-KW"/>
</dbReference>
<dbReference type="CDD" id="cd04730">
    <property type="entry name" value="NPD_like"/>
    <property type="match status" value="1"/>
</dbReference>
<dbReference type="FunFam" id="3.20.20.70:FF:000154">
    <property type="entry name" value="Probable nitronate monooxygenase"/>
    <property type="match status" value="1"/>
</dbReference>
<dbReference type="Gene3D" id="3.20.20.70">
    <property type="entry name" value="Aldolase class I"/>
    <property type="match status" value="1"/>
</dbReference>
<dbReference type="InterPro" id="IPR013785">
    <property type="entry name" value="Aldolase_TIM"/>
</dbReference>
<dbReference type="InterPro" id="IPR004136">
    <property type="entry name" value="NMO"/>
</dbReference>
<dbReference type="PANTHER" id="PTHR42747">
    <property type="entry name" value="NITRONATE MONOOXYGENASE-RELATED"/>
    <property type="match status" value="1"/>
</dbReference>
<dbReference type="PANTHER" id="PTHR42747:SF3">
    <property type="entry name" value="NITRONATE MONOOXYGENASE-RELATED"/>
    <property type="match status" value="1"/>
</dbReference>
<dbReference type="Pfam" id="PF03060">
    <property type="entry name" value="NMO"/>
    <property type="match status" value="1"/>
</dbReference>
<dbReference type="SUPFAM" id="SSF51412">
    <property type="entry name" value="Inosine monophosphate dehydrogenase (IMPDH)"/>
    <property type="match status" value="1"/>
</dbReference>
<reference key="1">
    <citation type="journal article" date="2005" name="J. Bacteriol.">
        <title>Whole-genome sequencing of Staphylococcus haemolyticus uncovers the extreme plasticity of its genome and the evolution of human-colonizing staphylococcal species.</title>
        <authorList>
            <person name="Takeuchi F."/>
            <person name="Watanabe S."/>
            <person name="Baba T."/>
            <person name="Yuzawa H."/>
            <person name="Ito T."/>
            <person name="Morimoto Y."/>
            <person name="Kuroda M."/>
            <person name="Cui L."/>
            <person name="Takahashi M."/>
            <person name="Ankai A."/>
            <person name="Baba S."/>
            <person name="Fukui S."/>
            <person name="Lee J.C."/>
            <person name="Hiramatsu K."/>
        </authorList>
    </citation>
    <scope>NUCLEOTIDE SEQUENCE [LARGE SCALE GENOMIC DNA]</scope>
    <source>
        <strain>JCSC1435</strain>
    </source>
</reference>
<gene>
    <name type="ordered locus">SH2032</name>
</gene>
<evidence type="ECO:0000250" key="1">
    <source>
        <dbReference type="UniProtKB" id="D0V3Y4"/>
    </source>
</evidence>
<evidence type="ECO:0000250" key="2">
    <source>
        <dbReference type="UniProtKB" id="Q9HWH9"/>
    </source>
</evidence>
<evidence type="ECO:0000305" key="3"/>
<accession>Q4L4T4</accession>
<proteinExistence type="inferred from homology"/>